<evidence type="ECO:0000255" key="1">
    <source>
        <dbReference type="HAMAP-Rule" id="MF_00318"/>
    </source>
</evidence>
<keyword id="KW-0963">Cytoplasm</keyword>
<keyword id="KW-0324">Glycolysis</keyword>
<keyword id="KW-0456">Lyase</keyword>
<keyword id="KW-0460">Magnesium</keyword>
<keyword id="KW-0479">Metal-binding</keyword>
<keyword id="KW-0964">Secreted</keyword>
<gene>
    <name evidence="1" type="primary">eno</name>
    <name type="ordered locus">XOO2814</name>
</gene>
<dbReference type="EC" id="4.2.1.11" evidence="1"/>
<dbReference type="EMBL" id="AP008229">
    <property type="protein sequence ID" value="BAE69569.1"/>
    <property type="molecule type" value="Genomic_DNA"/>
</dbReference>
<dbReference type="RefSeq" id="WP_011408895.1">
    <property type="nucleotide sequence ID" value="NC_007705.1"/>
</dbReference>
<dbReference type="SMR" id="Q2P1K8"/>
<dbReference type="KEGG" id="xom:XOO2814"/>
<dbReference type="HOGENOM" id="CLU_031223_2_1_6"/>
<dbReference type="UniPathway" id="UPA00109">
    <property type="reaction ID" value="UER00187"/>
</dbReference>
<dbReference type="GO" id="GO:0009986">
    <property type="term" value="C:cell surface"/>
    <property type="evidence" value="ECO:0007669"/>
    <property type="project" value="UniProtKB-SubCell"/>
</dbReference>
<dbReference type="GO" id="GO:0005576">
    <property type="term" value="C:extracellular region"/>
    <property type="evidence" value="ECO:0007669"/>
    <property type="project" value="UniProtKB-SubCell"/>
</dbReference>
<dbReference type="GO" id="GO:0000015">
    <property type="term" value="C:phosphopyruvate hydratase complex"/>
    <property type="evidence" value="ECO:0007669"/>
    <property type="project" value="InterPro"/>
</dbReference>
<dbReference type="GO" id="GO:0000287">
    <property type="term" value="F:magnesium ion binding"/>
    <property type="evidence" value="ECO:0007669"/>
    <property type="project" value="UniProtKB-UniRule"/>
</dbReference>
<dbReference type="GO" id="GO:0004634">
    <property type="term" value="F:phosphopyruvate hydratase activity"/>
    <property type="evidence" value="ECO:0007669"/>
    <property type="project" value="UniProtKB-UniRule"/>
</dbReference>
<dbReference type="GO" id="GO:0006096">
    <property type="term" value="P:glycolytic process"/>
    <property type="evidence" value="ECO:0007669"/>
    <property type="project" value="UniProtKB-UniRule"/>
</dbReference>
<dbReference type="CDD" id="cd03313">
    <property type="entry name" value="enolase"/>
    <property type="match status" value="1"/>
</dbReference>
<dbReference type="FunFam" id="3.20.20.120:FF:000001">
    <property type="entry name" value="Enolase"/>
    <property type="match status" value="1"/>
</dbReference>
<dbReference type="FunFam" id="3.30.390.10:FF:000001">
    <property type="entry name" value="Enolase"/>
    <property type="match status" value="1"/>
</dbReference>
<dbReference type="Gene3D" id="3.20.20.120">
    <property type="entry name" value="Enolase-like C-terminal domain"/>
    <property type="match status" value="1"/>
</dbReference>
<dbReference type="Gene3D" id="3.30.390.10">
    <property type="entry name" value="Enolase-like, N-terminal domain"/>
    <property type="match status" value="1"/>
</dbReference>
<dbReference type="HAMAP" id="MF_00318">
    <property type="entry name" value="Enolase"/>
    <property type="match status" value="1"/>
</dbReference>
<dbReference type="InterPro" id="IPR000941">
    <property type="entry name" value="Enolase"/>
</dbReference>
<dbReference type="InterPro" id="IPR036849">
    <property type="entry name" value="Enolase-like_C_sf"/>
</dbReference>
<dbReference type="InterPro" id="IPR029017">
    <property type="entry name" value="Enolase-like_N"/>
</dbReference>
<dbReference type="InterPro" id="IPR020810">
    <property type="entry name" value="Enolase_C"/>
</dbReference>
<dbReference type="InterPro" id="IPR020809">
    <property type="entry name" value="Enolase_CS"/>
</dbReference>
<dbReference type="InterPro" id="IPR020811">
    <property type="entry name" value="Enolase_N"/>
</dbReference>
<dbReference type="NCBIfam" id="TIGR01060">
    <property type="entry name" value="eno"/>
    <property type="match status" value="1"/>
</dbReference>
<dbReference type="PANTHER" id="PTHR11902">
    <property type="entry name" value="ENOLASE"/>
    <property type="match status" value="1"/>
</dbReference>
<dbReference type="PANTHER" id="PTHR11902:SF1">
    <property type="entry name" value="ENOLASE"/>
    <property type="match status" value="1"/>
</dbReference>
<dbReference type="Pfam" id="PF00113">
    <property type="entry name" value="Enolase_C"/>
    <property type="match status" value="1"/>
</dbReference>
<dbReference type="Pfam" id="PF03952">
    <property type="entry name" value="Enolase_N"/>
    <property type="match status" value="1"/>
</dbReference>
<dbReference type="PIRSF" id="PIRSF001400">
    <property type="entry name" value="Enolase"/>
    <property type="match status" value="1"/>
</dbReference>
<dbReference type="PRINTS" id="PR00148">
    <property type="entry name" value="ENOLASE"/>
</dbReference>
<dbReference type="SFLD" id="SFLDS00001">
    <property type="entry name" value="Enolase"/>
    <property type="match status" value="1"/>
</dbReference>
<dbReference type="SFLD" id="SFLDF00002">
    <property type="entry name" value="enolase"/>
    <property type="match status" value="1"/>
</dbReference>
<dbReference type="SMART" id="SM01192">
    <property type="entry name" value="Enolase_C"/>
    <property type="match status" value="1"/>
</dbReference>
<dbReference type="SMART" id="SM01193">
    <property type="entry name" value="Enolase_N"/>
    <property type="match status" value="1"/>
</dbReference>
<dbReference type="SUPFAM" id="SSF51604">
    <property type="entry name" value="Enolase C-terminal domain-like"/>
    <property type="match status" value="1"/>
</dbReference>
<dbReference type="SUPFAM" id="SSF54826">
    <property type="entry name" value="Enolase N-terminal domain-like"/>
    <property type="match status" value="1"/>
</dbReference>
<dbReference type="PROSITE" id="PS00164">
    <property type="entry name" value="ENOLASE"/>
    <property type="match status" value="1"/>
</dbReference>
<protein>
    <recommendedName>
        <fullName evidence="1">Enolase</fullName>
        <ecNumber evidence="1">4.2.1.11</ecNumber>
    </recommendedName>
    <alternativeName>
        <fullName evidence="1">2-phospho-D-glycerate hydro-lyase</fullName>
    </alternativeName>
    <alternativeName>
        <fullName evidence="1">2-phosphoglycerate dehydratase</fullName>
    </alternativeName>
</protein>
<feature type="chain" id="PRO_0000267137" description="Enolase">
    <location>
        <begin position="1"/>
        <end position="430"/>
    </location>
</feature>
<feature type="active site" description="Proton donor" evidence="1">
    <location>
        <position position="207"/>
    </location>
</feature>
<feature type="active site" description="Proton acceptor" evidence="1">
    <location>
        <position position="339"/>
    </location>
</feature>
<feature type="binding site" evidence="1">
    <location>
        <position position="165"/>
    </location>
    <ligand>
        <name>(2R)-2-phosphoglycerate</name>
        <dbReference type="ChEBI" id="CHEBI:58289"/>
    </ligand>
</feature>
<feature type="binding site" evidence="1">
    <location>
        <position position="244"/>
    </location>
    <ligand>
        <name>Mg(2+)</name>
        <dbReference type="ChEBI" id="CHEBI:18420"/>
    </ligand>
</feature>
<feature type="binding site" evidence="1">
    <location>
        <position position="287"/>
    </location>
    <ligand>
        <name>Mg(2+)</name>
        <dbReference type="ChEBI" id="CHEBI:18420"/>
    </ligand>
</feature>
<feature type="binding site" evidence="1">
    <location>
        <position position="314"/>
    </location>
    <ligand>
        <name>Mg(2+)</name>
        <dbReference type="ChEBI" id="CHEBI:18420"/>
    </ligand>
</feature>
<feature type="binding site" evidence="1">
    <location>
        <position position="339"/>
    </location>
    <ligand>
        <name>(2R)-2-phosphoglycerate</name>
        <dbReference type="ChEBI" id="CHEBI:58289"/>
    </ligand>
</feature>
<feature type="binding site" evidence="1">
    <location>
        <position position="368"/>
    </location>
    <ligand>
        <name>(2R)-2-phosphoglycerate</name>
        <dbReference type="ChEBI" id="CHEBI:58289"/>
    </ligand>
</feature>
<feature type="binding site" evidence="1">
    <location>
        <position position="369"/>
    </location>
    <ligand>
        <name>(2R)-2-phosphoglycerate</name>
        <dbReference type="ChEBI" id="CHEBI:58289"/>
    </ligand>
</feature>
<feature type="binding site" evidence="1">
    <location>
        <position position="390"/>
    </location>
    <ligand>
        <name>(2R)-2-phosphoglycerate</name>
        <dbReference type="ChEBI" id="CHEBI:58289"/>
    </ligand>
</feature>
<organism>
    <name type="scientific">Xanthomonas oryzae pv. oryzae (strain MAFF 311018)</name>
    <dbReference type="NCBI Taxonomy" id="342109"/>
    <lineage>
        <taxon>Bacteria</taxon>
        <taxon>Pseudomonadati</taxon>
        <taxon>Pseudomonadota</taxon>
        <taxon>Gammaproteobacteria</taxon>
        <taxon>Lysobacterales</taxon>
        <taxon>Lysobacteraceae</taxon>
        <taxon>Xanthomonas</taxon>
    </lineage>
</organism>
<accession>Q2P1K8</accession>
<comment type="function">
    <text evidence="1">Catalyzes the reversible conversion of 2-phosphoglycerate (2-PG) into phosphoenolpyruvate (PEP). It is essential for the degradation of carbohydrates via glycolysis.</text>
</comment>
<comment type="catalytic activity">
    <reaction evidence="1">
        <text>(2R)-2-phosphoglycerate = phosphoenolpyruvate + H2O</text>
        <dbReference type="Rhea" id="RHEA:10164"/>
        <dbReference type="ChEBI" id="CHEBI:15377"/>
        <dbReference type="ChEBI" id="CHEBI:58289"/>
        <dbReference type="ChEBI" id="CHEBI:58702"/>
        <dbReference type="EC" id="4.2.1.11"/>
    </reaction>
</comment>
<comment type="cofactor">
    <cofactor evidence="1">
        <name>Mg(2+)</name>
        <dbReference type="ChEBI" id="CHEBI:18420"/>
    </cofactor>
    <text evidence="1">Binds a second Mg(2+) ion via substrate during catalysis.</text>
</comment>
<comment type="pathway">
    <text evidence="1">Carbohydrate degradation; glycolysis; pyruvate from D-glyceraldehyde 3-phosphate: step 4/5.</text>
</comment>
<comment type="subunit">
    <text evidence="1">Component of the RNA degradosome, a multiprotein complex involved in RNA processing and mRNA degradation.</text>
</comment>
<comment type="subcellular location">
    <subcellularLocation>
        <location evidence="1">Cytoplasm</location>
    </subcellularLocation>
    <subcellularLocation>
        <location evidence="1">Secreted</location>
    </subcellularLocation>
    <subcellularLocation>
        <location evidence="1">Cell surface</location>
    </subcellularLocation>
    <text evidence="1">Fractions of enolase are present in both the cytoplasm and on the cell surface.</text>
</comment>
<comment type="similarity">
    <text evidence="1">Belongs to the enolase family.</text>
</comment>
<sequence length="430" mass="46015">MTTIAKILAREILDSRGNPTLEAEVTLDDGSFGRAAVPSGASTGTKEAVELRDGDKTRYLGKGVRHAVDNVNGTIAETLKNFDAADQQGLDRRLIDLDGTENKGRLGANALLGVSLAAAHAVAASRKQPLWQYLSTITESDVALPVPMMNIINGGAHADNNVDFQEFMVLPVGCSSFSEALRAGTEIFYSLKSVLKGHGLSTAVGDEGGFAPDFRSNVEALDTILEAIGKAGYTAGEDILLGLDVASSEFYDNGKYNLVGENKRLTSEQFVDFLADWVAQYPIISIEDGLAEDDWAGWKLLTDRVGKHVQLVGDDLFVTNPKIFKQGIDSGTANAILIKVNQIGTLTETLEAIAMAHAANYASIVSHRSGETEDTTIADIAVATTATQIKTGSLCRSDRVAKYNQLLRIEQALGSDARYAGRDAFVSIKR</sequence>
<reference key="1">
    <citation type="journal article" date="2005" name="Jpn. Agric. Res. Q.">
        <title>Genome sequence of Xanthomonas oryzae pv. oryzae suggests contribution of large numbers of effector genes and insertion sequences to its race diversity.</title>
        <authorList>
            <person name="Ochiai H."/>
            <person name="Inoue Y."/>
            <person name="Takeya M."/>
            <person name="Sasaki A."/>
            <person name="Kaku H."/>
        </authorList>
    </citation>
    <scope>NUCLEOTIDE SEQUENCE [LARGE SCALE GENOMIC DNA]</scope>
    <source>
        <strain>MAFF 311018</strain>
    </source>
</reference>
<name>ENO_XANOM</name>
<proteinExistence type="inferred from homology"/>